<feature type="propeptide" id="PRO_0000031131" evidence="1">
    <location>
        <begin position="1"/>
        <end position="2"/>
    </location>
</feature>
<feature type="chain" id="PRO_0000031132" description="Ribulose bisphosphate carboxylase large chain">
    <location>
        <begin position="3"/>
        <end position="477"/>
    </location>
</feature>
<feature type="active site" description="Proton acceptor" evidence="1">
    <location>
        <position position="175"/>
    </location>
</feature>
<feature type="active site" description="Proton acceptor" evidence="1">
    <location>
        <position position="294"/>
    </location>
</feature>
<feature type="binding site" description="in homodimeric partner" evidence="1">
    <location>
        <position position="123"/>
    </location>
    <ligand>
        <name>substrate</name>
    </ligand>
</feature>
<feature type="binding site" evidence="1">
    <location>
        <position position="173"/>
    </location>
    <ligand>
        <name>substrate</name>
    </ligand>
</feature>
<feature type="binding site" evidence="1">
    <location>
        <position position="177"/>
    </location>
    <ligand>
        <name>substrate</name>
    </ligand>
</feature>
<feature type="binding site" description="via carbamate group" evidence="1">
    <location>
        <position position="201"/>
    </location>
    <ligand>
        <name>Mg(2+)</name>
        <dbReference type="ChEBI" id="CHEBI:18420"/>
    </ligand>
</feature>
<feature type="binding site" evidence="1">
    <location>
        <position position="203"/>
    </location>
    <ligand>
        <name>Mg(2+)</name>
        <dbReference type="ChEBI" id="CHEBI:18420"/>
    </ligand>
</feature>
<feature type="binding site" evidence="1">
    <location>
        <position position="204"/>
    </location>
    <ligand>
        <name>Mg(2+)</name>
        <dbReference type="ChEBI" id="CHEBI:18420"/>
    </ligand>
</feature>
<feature type="binding site" evidence="1">
    <location>
        <position position="295"/>
    </location>
    <ligand>
        <name>substrate</name>
    </ligand>
</feature>
<feature type="binding site" evidence="1">
    <location>
        <position position="327"/>
    </location>
    <ligand>
        <name>substrate</name>
    </ligand>
</feature>
<feature type="binding site" evidence="1">
    <location>
        <position position="379"/>
    </location>
    <ligand>
        <name>substrate</name>
    </ligand>
</feature>
<feature type="site" description="Transition state stabilizer" evidence="1">
    <location>
        <position position="334"/>
    </location>
</feature>
<feature type="modified residue" description="N-acetylproline" evidence="1">
    <location>
        <position position="3"/>
    </location>
</feature>
<feature type="modified residue" description="N6-carboxylysine" evidence="1">
    <location>
        <position position="201"/>
    </location>
</feature>
<feature type="disulfide bond" description="Interchain; in linked form" evidence="1">
    <location>
        <position position="247"/>
    </location>
</feature>
<comment type="function">
    <text evidence="1">RuBisCO catalyzes two reactions: the carboxylation of D-ribulose 1,5-bisphosphate, the primary event in carbon dioxide fixation, as well as the oxidative fragmentation of the pentose substrate in the photorespiration process. Both reactions occur simultaneously and in competition at the same active site.</text>
</comment>
<comment type="catalytic activity">
    <reaction evidence="1">
        <text>2 (2R)-3-phosphoglycerate + 2 H(+) = D-ribulose 1,5-bisphosphate + CO2 + H2O</text>
        <dbReference type="Rhea" id="RHEA:23124"/>
        <dbReference type="ChEBI" id="CHEBI:15377"/>
        <dbReference type="ChEBI" id="CHEBI:15378"/>
        <dbReference type="ChEBI" id="CHEBI:16526"/>
        <dbReference type="ChEBI" id="CHEBI:57870"/>
        <dbReference type="ChEBI" id="CHEBI:58272"/>
        <dbReference type="EC" id="4.1.1.39"/>
    </reaction>
</comment>
<comment type="catalytic activity">
    <reaction evidence="1">
        <text>D-ribulose 1,5-bisphosphate + O2 = 2-phosphoglycolate + (2R)-3-phosphoglycerate + 2 H(+)</text>
        <dbReference type="Rhea" id="RHEA:36631"/>
        <dbReference type="ChEBI" id="CHEBI:15378"/>
        <dbReference type="ChEBI" id="CHEBI:15379"/>
        <dbReference type="ChEBI" id="CHEBI:57870"/>
        <dbReference type="ChEBI" id="CHEBI:58033"/>
        <dbReference type="ChEBI" id="CHEBI:58272"/>
    </reaction>
</comment>
<comment type="cofactor">
    <cofactor evidence="1">
        <name>Mg(2+)</name>
        <dbReference type="ChEBI" id="CHEBI:18420"/>
    </cofactor>
    <text evidence="1">Binds 1 Mg(2+) ion per subunit.</text>
</comment>
<comment type="subunit">
    <text evidence="1">Heterohexadecamer of 8 large chains and 8 small chains; disulfide-linked. The disulfide link is formed within the large subunit homodimers.</text>
</comment>
<comment type="subcellular location">
    <subcellularLocation>
        <location>Plastid</location>
        <location>Chloroplast</location>
    </subcellularLocation>
</comment>
<comment type="PTM">
    <text evidence="1">The disulfide bond which can form in the large chain dimeric partners within the hexadecamer appears to be associated with oxidative stress and protein turnover.</text>
</comment>
<comment type="miscellaneous">
    <text evidence="1">The basic functional RuBisCO is composed of a large chain homodimer in a 'head-to-tail' conformation. In form I RuBisCO this homodimer is arranged in a barrel-like tetramer with the small subunits forming a tetrameric 'cap' on each end of the 'barrel'.</text>
</comment>
<comment type="similarity">
    <text evidence="1">Belongs to the RuBisCO large chain family. Type I subfamily.</text>
</comment>
<reference key="1">
    <citation type="submission" date="1993-10" db="EMBL/GenBank/DDBJ databases">
        <title>Complete rbcL coding sequence with 5' and 3' untranslated regions.</title>
        <authorList>
            <person name="Garcia P.G."/>
        </authorList>
    </citation>
    <scope>NUCLEOTIDE SEQUENCE [GENOMIC DNA]</scope>
</reference>
<proteinExistence type="inferred from homology"/>
<evidence type="ECO:0000255" key="1">
    <source>
        <dbReference type="HAMAP-Rule" id="MF_01338"/>
    </source>
</evidence>
<protein>
    <recommendedName>
        <fullName evidence="1">Ribulose bisphosphate carboxylase large chain</fullName>
        <shortName evidence="1">RuBisCO large subunit</shortName>
        <ecNumber evidence="1">4.1.1.39</ecNumber>
    </recommendedName>
</protein>
<geneLocation type="chloroplast"/>
<sequence>MSPQTETKASVGFQAGVKDYKLTYYTPEYETKDTDILAAFRVTPQPGVPPEEAGAAVAAESSTGTWTTVWTDGLTSLDRYKGRCYHIEPVAGEDNQWICYVAYPLDLFEEGSVTNMFTSIVGNVFGFKALRALRLEDLRIPPAYTKTFQGPPHGIQVERDKLNKYGRPLLGCTIKPKLGLSAKNYGRACYECLRGGLDFTKDDENVNSQPFMRWRDRFVFCAEAIYKAQAETGEIKGHYLNATAGTCEEMIKRAVFARELGVPIVMHDYITGGFTANTSLAHYCRDNGLLLHIHRAMHAVIDRQKNHGMHFRVLAKALRMSGGDHIHSGTVVGKLEGEREMTLGFVDLLRDDFIEKDRARGIFFTQDWVSMPGVIPVASGGIHVWHMPALTEIFGDDSVLQFGGGTLGHPWGNAPGAAANRVALEACVQARNEGRDLAREGNEIIREACKWSPELAAACEVWKAIKFEFEPVDTIDE</sequence>
<accession>P48684</accession>
<keyword id="KW-0007">Acetylation</keyword>
<keyword id="KW-0113">Calvin cycle</keyword>
<keyword id="KW-0120">Carbon dioxide fixation</keyword>
<keyword id="KW-0150">Chloroplast</keyword>
<keyword id="KW-1015">Disulfide bond</keyword>
<keyword id="KW-0456">Lyase</keyword>
<keyword id="KW-0460">Magnesium</keyword>
<keyword id="KW-0479">Metal-binding</keyword>
<keyword id="KW-0503">Monooxygenase</keyword>
<keyword id="KW-0560">Oxidoreductase</keyword>
<keyword id="KW-0601">Photorespiration</keyword>
<keyword id="KW-0602">Photosynthesis</keyword>
<keyword id="KW-0934">Plastid</keyword>
<dbReference type="EC" id="4.1.1.39" evidence="1"/>
<dbReference type="EMBL" id="L15300">
    <property type="protein sequence ID" value="AAA84028.1"/>
    <property type="molecule type" value="Genomic_DNA"/>
</dbReference>
<dbReference type="RefSeq" id="YP_009156214.1">
    <property type="nucleotide sequence ID" value="NC_027468.1"/>
</dbReference>
<dbReference type="SMR" id="P48684"/>
<dbReference type="EnsemblPlants" id="AVESA.00001b.r3.4Cg0000664.2">
    <property type="protein sequence ID" value="cds.AVESA.00001b.r3.4Cg0000664.2"/>
    <property type="gene ID" value="AVESA.00001b.r3.4Cg0000664"/>
</dbReference>
<dbReference type="EnsemblPlants" id="AVESA.00001b.r3.4Cg0000664.3">
    <property type="protein sequence ID" value="cds.AVESA.00001b.r3.4Cg0000664.3"/>
    <property type="gene ID" value="AVESA.00001b.r3.4Cg0000664"/>
</dbReference>
<dbReference type="EnsemblPlants" id="AVESA.00001b.r3.4Cg0000664.4">
    <property type="protein sequence ID" value="cds.AVESA.00001b.r3.4Cg0000664.4"/>
    <property type="gene ID" value="AVESA.00001b.r3.4Cg0000664"/>
</dbReference>
<dbReference type="EnsemblPlants" id="AVESA.00001b.r3.Ung0000541.1">
    <property type="protein sequence ID" value="cds.AVESA.00001b.r3.Ung0000541.1"/>
    <property type="gene ID" value="AVESA.00001b.r3.Ung0000541"/>
</dbReference>
<dbReference type="EnsemblPlants" id="AVESA.00001b.r3.Ung0000541.3">
    <property type="protein sequence ID" value="cds.AVESA.00001b.r3.Ung0000541.3"/>
    <property type="gene ID" value="AVESA.00001b.r3.Ung0000541"/>
</dbReference>
<dbReference type="EnsemblPlants" id="AVESA.00001b.r3.Ung0000541.4">
    <property type="protein sequence ID" value="cds.AVESA.00001b.r3.Ung0000541.4"/>
    <property type="gene ID" value="AVESA.00001b.r3.Ung0000541"/>
</dbReference>
<dbReference type="EnsemblPlants" id="AVESA.00001b.r3.Ung0000541.6">
    <property type="protein sequence ID" value="cds.AVESA.00001b.r3.Ung0000541.6"/>
    <property type="gene ID" value="AVESA.00001b.r3.Ung0000541"/>
</dbReference>
<dbReference type="EnsemblPlants" id="AVESA.00001b.r3.Ung0000569.1">
    <property type="protein sequence ID" value="cds.AVESA.00001b.r3.Ung0000569.1"/>
    <property type="gene ID" value="AVESA.00001b.r3.Ung0000569"/>
</dbReference>
<dbReference type="EnsemblPlants" id="AVESA.00001b.r3.Ung0000569.2">
    <property type="protein sequence ID" value="cds.AVESA.00001b.r3.Ung0000569.2"/>
    <property type="gene ID" value="AVESA.00001b.r3.Ung0000569"/>
</dbReference>
<dbReference type="EnsemblPlants" id="AVESA.00001b.r3.Ung0000569.3">
    <property type="protein sequence ID" value="cds.AVESA.00001b.r3.Ung0000569.3"/>
    <property type="gene ID" value="AVESA.00001b.r3.Ung0000569"/>
</dbReference>
<dbReference type="EnsemblPlants" id="AVESA.00001b.r3.Ung0000569.4">
    <property type="protein sequence ID" value="cds.AVESA.00001b.r3.Ung0000569.4"/>
    <property type="gene ID" value="AVESA.00001b.r3.Ung0000569"/>
</dbReference>
<dbReference type="EnsemblPlants" id="AVESA.00001b.r3.Ung0000623.2">
    <property type="protein sequence ID" value="cds.AVESA.00001b.r3.Ung0000623.2"/>
    <property type="gene ID" value="AVESA.00001b.r3.Ung0000623"/>
</dbReference>
<dbReference type="EnsemblPlants" id="AVESA.00001b.r3.Ung0000623.3">
    <property type="protein sequence ID" value="cds.AVESA.00001b.r3.Ung0000623.3"/>
    <property type="gene ID" value="AVESA.00001b.r3.Ung0000623"/>
</dbReference>
<dbReference type="EnsemblPlants" id="AVESA.00001b.r3.Ung0000623.4">
    <property type="protein sequence ID" value="cds.AVESA.00001b.r3.Ung0000623.4"/>
    <property type="gene ID" value="AVESA.00001b.r3.Ung0000623"/>
</dbReference>
<dbReference type="GeneID" id="25016635"/>
<dbReference type="Gramene" id="AVESA.00001b.r3.4Cg0000664.2">
    <property type="protein sequence ID" value="cds.AVESA.00001b.r3.4Cg0000664.2"/>
    <property type="gene ID" value="AVESA.00001b.r3.4Cg0000664"/>
</dbReference>
<dbReference type="Gramene" id="AVESA.00001b.r3.4Cg0000664.3">
    <property type="protein sequence ID" value="cds.AVESA.00001b.r3.4Cg0000664.3"/>
    <property type="gene ID" value="AVESA.00001b.r3.4Cg0000664"/>
</dbReference>
<dbReference type="Gramene" id="AVESA.00001b.r3.4Cg0000664.4">
    <property type="protein sequence ID" value="cds.AVESA.00001b.r3.4Cg0000664.4"/>
    <property type="gene ID" value="AVESA.00001b.r3.4Cg0000664"/>
</dbReference>
<dbReference type="Gramene" id="AVESA.00001b.r3.Ung0000541.1">
    <property type="protein sequence ID" value="cds.AVESA.00001b.r3.Ung0000541.1"/>
    <property type="gene ID" value="AVESA.00001b.r3.Ung0000541"/>
</dbReference>
<dbReference type="Gramene" id="AVESA.00001b.r3.Ung0000541.3">
    <property type="protein sequence ID" value="cds.AVESA.00001b.r3.Ung0000541.3"/>
    <property type="gene ID" value="AVESA.00001b.r3.Ung0000541"/>
</dbReference>
<dbReference type="Gramene" id="AVESA.00001b.r3.Ung0000541.4">
    <property type="protein sequence ID" value="cds.AVESA.00001b.r3.Ung0000541.4"/>
    <property type="gene ID" value="AVESA.00001b.r3.Ung0000541"/>
</dbReference>
<dbReference type="Gramene" id="AVESA.00001b.r3.Ung0000541.6">
    <property type="protein sequence ID" value="cds.AVESA.00001b.r3.Ung0000541.6"/>
    <property type="gene ID" value="AVESA.00001b.r3.Ung0000541"/>
</dbReference>
<dbReference type="Gramene" id="AVESA.00001b.r3.Ung0000569.1">
    <property type="protein sequence ID" value="cds.AVESA.00001b.r3.Ung0000569.1"/>
    <property type="gene ID" value="AVESA.00001b.r3.Ung0000569"/>
</dbReference>
<dbReference type="Gramene" id="AVESA.00001b.r3.Ung0000569.2">
    <property type="protein sequence ID" value="cds.AVESA.00001b.r3.Ung0000569.2"/>
    <property type="gene ID" value="AVESA.00001b.r3.Ung0000569"/>
</dbReference>
<dbReference type="Gramene" id="AVESA.00001b.r3.Ung0000569.3">
    <property type="protein sequence ID" value="cds.AVESA.00001b.r3.Ung0000569.3"/>
    <property type="gene ID" value="AVESA.00001b.r3.Ung0000569"/>
</dbReference>
<dbReference type="Gramene" id="AVESA.00001b.r3.Ung0000569.4">
    <property type="protein sequence ID" value="cds.AVESA.00001b.r3.Ung0000569.4"/>
    <property type="gene ID" value="AVESA.00001b.r3.Ung0000569"/>
</dbReference>
<dbReference type="Gramene" id="AVESA.00001b.r3.Ung0000623.2">
    <property type="protein sequence ID" value="cds.AVESA.00001b.r3.Ung0000623.2"/>
    <property type="gene ID" value="AVESA.00001b.r3.Ung0000623"/>
</dbReference>
<dbReference type="Gramene" id="AVESA.00001b.r3.Ung0000623.3">
    <property type="protein sequence ID" value="cds.AVESA.00001b.r3.Ung0000623.3"/>
    <property type="gene ID" value="AVESA.00001b.r3.Ung0000623"/>
</dbReference>
<dbReference type="Gramene" id="AVESA.00001b.r3.Ung0000623.4">
    <property type="protein sequence ID" value="cds.AVESA.00001b.r3.Ung0000623.4"/>
    <property type="gene ID" value="AVESA.00001b.r3.Ung0000623"/>
</dbReference>
<dbReference type="GO" id="GO:0009507">
    <property type="term" value="C:chloroplast"/>
    <property type="evidence" value="ECO:0007669"/>
    <property type="project" value="UniProtKB-SubCell"/>
</dbReference>
<dbReference type="GO" id="GO:0000287">
    <property type="term" value="F:magnesium ion binding"/>
    <property type="evidence" value="ECO:0007669"/>
    <property type="project" value="UniProtKB-UniRule"/>
</dbReference>
<dbReference type="GO" id="GO:0004497">
    <property type="term" value="F:monooxygenase activity"/>
    <property type="evidence" value="ECO:0007669"/>
    <property type="project" value="UniProtKB-KW"/>
</dbReference>
<dbReference type="GO" id="GO:0016984">
    <property type="term" value="F:ribulose-bisphosphate carboxylase activity"/>
    <property type="evidence" value="ECO:0007669"/>
    <property type="project" value="UniProtKB-UniRule"/>
</dbReference>
<dbReference type="GO" id="GO:0009853">
    <property type="term" value="P:photorespiration"/>
    <property type="evidence" value="ECO:0007669"/>
    <property type="project" value="UniProtKB-KW"/>
</dbReference>
<dbReference type="GO" id="GO:0019253">
    <property type="term" value="P:reductive pentose-phosphate cycle"/>
    <property type="evidence" value="ECO:0007669"/>
    <property type="project" value="UniProtKB-UniRule"/>
</dbReference>
<dbReference type="CDD" id="cd08212">
    <property type="entry name" value="RuBisCO_large_I"/>
    <property type="match status" value="1"/>
</dbReference>
<dbReference type="FunFam" id="3.20.20.110:FF:000001">
    <property type="entry name" value="Ribulose bisphosphate carboxylase large chain"/>
    <property type="match status" value="1"/>
</dbReference>
<dbReference type="FunFam" id="3.30.70.150:FF:000001">
    <property type="entry name" value="Ribulose bisphosphate carboxylase large chain"/>
    <property type="match status" value="1"/>
</dbReference>
<dbReference type="Gene3D" id="3.20.20.110">
    <property type="entry name" value="Ribulose bisphosphate carboxylase, large subunit, C-terminal domain"/>
    <property type="match status" value="1"/>
</dbReference>
<dbReference type="Gene3D" id="3.30.70.150">
    <property type="entry name" value="RuBisCO large subunit, N-terminal domain"/>
    <property type="match status" value="1"/>
</dbReference>
<dbReference type="HAMAP" id="MF_01338">
    <property type="entry name" value="RuBisCO_L_type1"/>
    <property type="match status" value="1"/>
</dbReference>
<dbReference type="InterPro" id="IPR033966">
    <property type="entry name" value="RuBisCO"/>
</dbReference>
<dbReference type="InterPro" id="IPR020878">
    <property type="entry name" value="RuBisCo_large_chain_AS"/>
</dbReference>
<dbReference type="InterPro" id="IPR000685">
    <property type="entry name" value="RuBisCO_lsu_C"/>
</dbReference>
<dbReference type="InterPro" id="IPR036376">
    <property type="entry name" value="RuBisCO_lsu_C_sf"/>
</dbReference>
<dbReference type="InterPro" id="IPR017443">
    <property type="entry name" value="RuBisCO_lsu_fd_N"/>
</dbReference>
<dbReference type="InterPro" id="IPR036422">
    <property type="entry name" value="RuBisCO_lsu_N_sf"/>
</dbReference>
<dbReference type="InterPro" id="IPR020888">
    <property type="entry name" value="RuBisCO_lsuI"/>
</dbReference>
<dbReference type="NCBIfam" id="NF003252">
    <property type="entry name" value="PRK04208.1"/>
    <property type="match status" value="1"/>
</dbReference>
<dbReference type="PANTHER" id="PTHR42704:SF14">
    <property type="entry name" value="OS01G0791033 PROTEIN"/>
    <property type="match status" value="1"/>
</dbReference>
<dbReference type="PANTHER" id="PTHR42704">
    <property type="entry name" value="RIBULOSE BISPHOSPHATE CARBOXYLASE"/>
    <property type="match status" value="1"/>
</dbReference>
<dbReference type="Pfam" id="PF00016">
    <property type="entry name" value="RuBisCO_large"/>
    <property type="match status" value="1"/>
</dbReference>
<dbReference type="Pfam" id="PF02788">
    <property type="entry name" value="RuBisCO_large_N"/>
    <property type="match status" value="1"/>
</dbReference>
<dbReference type="SFLD" id="SFLDG01052">
    <property type="entry name" value="RuBisCO"/>
    <property type="match status" value="1"/>
</dbReference>
<dbReference type="SFLD" id="SFLDS00014">
    <property type="entry name" value="RuBisCO"/>
    <property type="match status" value="1"/>
</dbReference>
<dbReference type="SFLD" id="SFLDG00301">
    <property type="entry name" value="RuBisCO-like_proteins"/>
    <property type="match status" value="1"/>
</dbReference>
<dbReference type="SUPFAM" id="SSF51649">
    <property type="entry name" value="RuBisCo, C-terminal domain"/>
    <property type="match status" value="1"/>
</dbReference>
<dbReference type="SUPFAM" id="SSF54966">
    <property type="entry name" value="RuBisCO, large subunit, small (N-terminal) domain"/>
    <property type="match status" value="1"/>
</dbReference>
<dbReference type="PROSITE" id="PS00157">
    <property type="entry name" value="RUBISCO_LARGE"/>
    <property type="match status" value="1"/>
</dbReference>
<organism>
    <name type="scientific">Avena sativa</name>
    <name type="common">Oat</name>
    <dbReference type="NCBI Taxonomy" id="4498"/>
    <lineage>
        <taxon>Eukaryota</taxon>
        <taxon>Viridiplantae</taxon>
        <taxon>Streptophyta</taxon>
        <taxon>Embryophyta</taxon>
        <taxon>Tracheophyta</taxon>
        <taxon>Spermatophyta</taxon>
        <taxon>Magnoliopsida</taxon>
        <taxon>Liliopsida</taxon>
        <taxon>Poales</taxon>
        <taxon>Poaceae</taxon>
        <taxon>BOP clade</taxon>
        <taxon>Pooideae</taxon>
        <taxon>Poodae</taxon>
        <taxon>Poeae</taxon>
        <taxon>Poeae Chloroplast Group 1 (Aveneae type)</taxon>
        <taxon>Aveninae</taxon>
        <taxon>Avena</taxon>
    </lineage>
</organism>
<name>RBL_AVESA</name>
<gene>
    <name evidence="1" type="primary">rbcL</name>
</gene>